<feature type="chain" id="PRO_0000311632" description="Matrix protein 2">
    <location>
        <begin position="1" status="less than"/>
        <end position="92" status="greater than"/>
    </location>
</feature>
<feature type="topological domain" description="Virion surface" evidence="2">
    <location>
        <begin position="1" status="less than"/>
        <end position="20"/>
    </location>
</feature>
<feature type="transmembrane region" description="Helical" evidence="2">
    <location>
        <begin position="21"/>
        <end position="41"/>
    </location>
</feature>
<feature type="topological domain" description="Intravirion" evidence="2">
    <location>
        <begin position="42"/>
        <end position="92" status="greater than"/>
    </location>
</feature>
<feature type="region of interest" description="Disordered" evidence="3">
    <location>
        <begin position="60"/>
        <end position="86"/>
    </location>
</feature>
<feature type="site" description="Essential for channel activity, seems to be protonated during channel activation, and may play a role in the channel gating and selectivity" evidence="1">
    <location>
        <position position="35"/>
    </location>
</feature>
<feature type="site" description="Seems to be involved in pH gating" evidence="1">
    <location>
        <position position="39"/>
    </location>
</feature>
<feature type="modified residue" description="Phosphoserine; by host" evidence="1">
    <location>
        <position position="62"/>
    </location>
</feature>
<feature type="lipid moiety-binding region" description="S-palmitoyl cysteine; by host" evidence="1">
    <location>
        <position position="48"/>
    </location>
</feature>
<feature type="disulfide bond" description="Interchain (with C-17)" evidence="1">
    <location>
        <position position="15"/>
    </location>
</feature>
<feature type="disulfide bond" description="Interchain (with C-19)" evidence="1">
    <location>
        <position position="17"/>
    </location>
</feature>
<feature type="non-terminal residue">
    <location>
        <position position="1"/>
    </location>
</feature>
<feature type="non-terminal residue">
    <location>
        <position position="92"/>
    </location>
</feature>
<evidence type="ECO:0000250" key="1"/>
<evidence type="ECO:0000255" key="2"/>
<evidence type="ECO:0000256" key="3">
    <source>
        <dbReference type="SAM" id="MobiDB-lite"/>
    </source>
</evidence>
<evidence type="ECO:0000305" key="4"/>
<accession>Q6DPQ7</accession>
<name>M2_I02A7</name>
<keyword id="KW-0025">Alternative splicing</keyword>
<keyword id="KW-1015">Disulfide bond</keyword>
<keyword id="KW-1032">Host cell membrane</keyword>
<keyword id="KW-1043">Host membrane</keyword>
<keyword id="KW-0375">Hydrogen ion transport</keyword>
<keyword id="KW-0407">Ion channel</keyword>
<keyword id="KW-0406">Ion transport</keyword>
<keyword id="KW-0449">Lipoprotein</keyword>
<keyword id="KW-0472">Membrane</keyword>
<keyword id="KW-0564">Palmitate</keyword>
<keyword id="KW-0597">Phosphoprotein</keyword>
<keyword id="KW-0735">Signal-anchor</keyword>
<keyword id="KW-0812">Transmembrane</keyword>
<keyword id="KW-1133">Transmembrane helix</keyword>
<keyword id="KW-0813">Transport</keyword>
<keyword id="KW-1182">Viral ion channel</keyword>
<keyword id="KW-0946">Virion</keyword>
<sequence>LLTEVETPTRNEWECRCSDSSDPLVVAASIIGILHLILWILDRLFFKCIYRRLKYGLKRGPSTAGVPESMREEYRQEQQSAVDVDDGHFVNI</sequence>
<reference key="1">
    <citation type="journal article" date="2004" name="Nature">
        <title>Genesis of a highly pathogenic and potentially pandemic H5N1 influenza virus in eastern Asia.</title>
        <authorList>
            <person name="Li K.S."/>
            <person name="Guan Y."/>
            <person name="Wang J."/>
            <person name="Smith G.J.D."/>
            <person name="Xu K.M."/>
            <person name="Duan L."/>
            <person name="Rahardjo A.P."/>
            <person name="Puthavathana P."/>
            <person name="Buranathai C."/>
            <person name="Nguyen T.D."/>
            <person name="Estoepangestie A.T.S."/>
            <person name="Chaisingh A."/>
            <person name="Auewarakul P."/>
            <person name="Long H.T."/>
            <person name="Hanh N.T.H."/>
            <person name="Webby R.J."/>
            <person name="Poon L.L.M."/>
            <person name="Chen H."/>
            <person name="Shortridge K.F."/>
            <person name="Yuen K.Y."/>
            <person name="Webster R.G."/>
            <person name="Peiris J.S.M."/>
        </authorList>
    </citation>
    <scope>NUCLEOTIDE SEQUENCE [GENOMIC RNA]</scope>
</reference>
<dbReference type="EMBL" id="AY651417">
    <property type="protein sequence ID" value="AAT70586.1"/>
    <property type="molecule type" value="Genomic_RNA"/>
</dbReference>
<dbReference type="SMR" id="Q6DPQ7"/>
<dbReference type="GO" id="GO:0020002">
    <property type="term" value="C:host cell plasma membrane"/>
    <property type="evidence" value="ECO:0007669"/>
    <property type="project" value="UniProtKB-SubCell"/>
</dbReference>
<dbReference type="GO" id="GO:0016020">
    <property type="term" value="C:membrane"/>
    <property type="evidence" value="ECO:0007669"/>
    <property type="project" value="UniProtKB-KW"/>
</dbReference>
<dbReference type="GO" id="GO:0055036">
    <property type="term" value="C:virion membrane"/>
    <property type="evidence" value="ECO:0007669"/>
    <property type="project" value="UniProtKB-SubCell"/>
</dbReference>
<dbReference type="GO" id="GO:0015267">
    <property type="term" value="F:channel activity"/>
    <property type="evidence" value="ECO:0007669"/>
    <property type="project" value="UniProtKB-KW"/>
</dbReference>
<dbReference type="GO" id="GO:0015078">
    <property type="term" value="F:proton transmembrane transporter activity"/>
    <property type="evidence" value="ECO:0007669"/>
    <property type="project" value="InterPro"/>
</dbReference>
<dbReference type="Gene3D" id="6.10.250.1640">
    <property type="match status" value="1"/>
</dbReference>
<dbReference type="InterPro" id="IPR002089">
    <property type="entry name" value="Flu_M2"/>
</dbReference>
<dbReference type="Pfam" id="PF00599">
    <property type="entry name" value="Flu_M2"/>
    <property type="match status" value="1"/>
</dbReference>
<gene>
    <name type="primary">M</name>
</gene>
<organismHost>
    <name type="scientific">Aves</name>
    <dbReference type="NCBI Taxonomy" id="8782"/>
</organismHost>
<organismHost>
    <name type="scientific">Felis catus</name>
    <name type="common">Cat</name>
    <name type="synonym">Felis silvestris catus</name>
    <dbReference type="NCBI Taxonomy" id="9685"/>
</organismHost>
<organismHost>
    <name type="scientific">Homo sapiens</name>
    <name type="common">Human</name>
    <dbReference type="NCBI Taxonomy" id="9606"/>
</organismHost>
<organismHost>
    <name type="scientific">Panthera pardus</name>
    <name type="common">Leopard</name>
    <name type="synonym">Felis pardus</name>
    <dbReference type="NCBI Taxonomy" id="9691"/>
</organismHost>
<organismHost>
    <name type="scientific">Panthera tigris</name>
    <name type="common">Tiger</name>
    <dbReference type="NCBI Taxonomy" id="9694"/>
</organismHost>
<organismHost>
    <name type="scientific">Sus scrofa</name>
    <name type="common">Pig</name>
    <dbReference type="NCBI Taxonomy" id="9823"/>
</organismHost>
<organism>
    <name type="scientific">Influenza A virus (strain A/Teal/China/2978.1/2002 H5N1 genotype W)</name>
    <dbReference type="NCBI Taxonomy" id="284215"/>
    <lineage>
        <taxon>Viruses</taxon>
        <taxon>Riboviria</taxon>
        <taxon>Orthornavirae</taxon>
        <taxon>Negarnaviricota</taxon>
        <taxon>Polyploviricotina</taxon>
        <taxon>Insthoviricetes</taxon>
        <taxon>Articulavirales</taxon>
        <taxon>Orthomyxoviridae</taxon>
        <taxon>Alphainfluenzavirus</taxon>
        <taxon>Alphainfluenzavirus influenzae</taxon>
        <taxon>Influenza A virus</taxon>
    </lineage>
</organism>
<comment type="function">
    <text evidence="1">Forms a proton-selective ion channel that is necessary for the efficient release of the viral genome during virus entry. After attaching to the cell surface, the virion enters the cell by endocytosis. Acidification of the endosome triggers M2 ion channel activity. The influx of protons into virion interior is believed to disrupt interactions between the viral ribonucleoprotein (RNP), matrix protein 1 (M1), and lipid bilayers, thereby freeing the viral genome from interaction with viral proteins and enabling RNA segments to migrate to the host cell nucleus, where influenza virus RNA transcription and replication occur. Also plays a role in viral proteins secretory pathway. Elevates the intravesicular pH of normally acidic compartments, such as trans-Golgi network, preventing newly formed hemagglutinin from premature switching to the fusion-active conformation (By similarity).</text>
</comment>
<comment type="activity regulation">
    <text>The M2 protein from most influenza A strains is inhibited by amantadine and rimantadine, resulting in viral uncoating incapacity. Emergence of amantadine-resistant variants is usually rapid.</text>
</comment>
<comment type="subunit">
    <text evidence="1">Homotetramer; composed of two disulfide-linked dimers held together by non-covalent interactions (By similarity). May interact with matrix protein 1.</text>
</comment>
<comment type="subcellular location">
    <subcellularLocation>
        <location>Virion membrane</location>
    </subcellularLocation>
    <subcellularLocation>
        <location>Host apical cell membrane</location>
        <topology>Single-pass type III membrane protein</topology>
    </subcellularLocation>
    <text evidence="1">Abundantly expressed at the apical plasma membrane in infected polarized epithelial cells, in close proximity to budding and assembled virions. Minor component of virions (only 16-20 molecules/virion) (By similarity).</text>
</comment>
<comment type="alternative products">
    <event type="alternative splicing"/>
    <isoform>
        <id>Q6DPQ7-1</id>
        <name>M2</name>
        <sequence type="displayed"/>
    </isoform>
    <isoform>
        <id>Q6DPQ6-1</id>
        <name>M1</name>
        <sequence type="external"/>
    </isoform>
    <text>Only the first 9 residues are shared by the 2 isoforms.</text>
</comment>
<comment type="domain">
    <text evidence="1">Cytoplasmic tail plays an important role in virion assembly and morphogenesis.</text>
</comment>
<comment type="miscellaneous">
    <text>When the channel is activated, one or more imidazole moieties of His-35 probably become bi-protonated.</text>
</comment>
<comment type="similarity">
    <text evidence="4">Belongs to the influenza viruses matrix protein M2 family.</text>
</comment>
<proteinExistence type="inferred from homology"/>
<protein>
    <recommendedName>
        <fullName>Matrix protein 2</fullName>
    </recommendedName>
    <alternativeName>
        <fullName>Proton channel protein M2</fullName>
    </alternativeName>
</protein>